<sequence length="145" mass="15217">MASLATVAAVKPSAAIKGLGGSSLAGAKLSIKPSRLSFKPKSIRANGVVAKYGDKSVYFDLEDLGNTTGQWDVYGSDAPSPYNPLQSKFFETFAAPFTKRGLLLKFLILGGGSLLTYVSATSTGEVLPIKRGPQEPPKLGPRGKL</sequence>
<dbReference type="EMBL" id="AJ245631">
    <property type="protein sequence ID" value="CAB52749.1"/>
    <property type="molecule type" value="mRNA"/>
</dbReference>
<dbReference type="EMBL" id="AB012247">
    <property type="protein sequence ID" value="BAB02680.1"/>
    <property type="molecule type" value="Genomic_DNA"/>
</dbReference>
<dbReference type="EMBL" id="CP002686">
    <property type="protein sequence ID" value="AEE75776.1"/>
    <property type="molecule type" value="Genomic_DNA"/>
</dbReference>
<dbReference type="EMBL" id="AY088822">
    <property type="protein sequence ID" value="AAM67131.1"/>
    <property type="molecule type" value="mRNA"/>
</dbReference>
<dbReference type="EMBL" id="Z35381">
    <property type="protein sequence ID" value="CAA84571.1"/>
    <property type="molecule type" value="mRNA"/>
</dbReference>
<dbReference type="SMR" id="Q9SUI7"/>
<dbReference type="BioGRID" id="6193">
    <property type="interactions" value="1"/>
</dbReference>
<dbReference type="FunCoup" id="Q9SUI7">
    <property type="interactions" value="1012"/>
</dbReference>
<dbReference type="STRING" id="3702.Q9SUI7"/>
<dbReference type="PaxDb" id="3702-AT3G16140.1"/>
<dbReference type="ProteomicsDB" id="226391"/>
<dbReference type="EnsemblPlants" id="AT3G16140.1">
    <property type="protein sequence ID" value="AT3G16140.1"/>
    <property type="gene ID" value="AT3G16140"/>
</dbReference>
<dbReference type="Gramene" id="AT3G16140.1">
    <property type="protein sequence ID" value="AT3G16140.1"/>
    <property type="gene ID" value="AT3G16140"/>
</dbReference>
<dbReference type="KEGG" id="ath:AT3G16140"/>
<dbReference type="Araport" id="AT3G16140"/>
<dbReference type="TAIR" id="AT3G16140">
    <property type="gene designation" value="PSAH-1"/>
</dbReference>
<dbReference type="eggNOG" id="ENOG502RXI9">
    <property type="taxonomic scope" value="Eukaryota"/>
</dbReference>
<dbReference type="HOGENOM" id="CLU_152855_0_0_1"/>
<dbReference type="InParanoid" id="Q9SUI7"/>
<dbReference type="OMA" id="DMENTTG"/>
<dbReference type="OrthoDB" id="496139at2759"/>
<dbReference type="PhylomeDB" id="Q9SUI7"/>
<dbReference type="BioCyc" id="MetaCyc:MONOMER-1093"/>
<dbReference type="PRO" id="PR:Q9SUI7"/>
<dbReference type="Proteomes" id="UP000006548">
    <property type="component" value="Chromosome 3"/>
</dbReference>
<dbReference type="ExpressionAtlas" id="Q9SUI7">
    <property type="expression patterns" value="baseline and differential"/>
</dbReference>
<dbReference type="GO" id="GO:0009507">
    <property type="term" value="C:chloroplast"/>
    <property type="evidence" value="ECO:0007005"/>
    <property type="project" value="TAIR"/>
</dbReference>
<dbReference type="GO" id="GO:0009534">
    <property type="term" value="C:chloroplast thylakoid"/>
    <property type="evidence" value="ECO:0007005"/>
    <property type="project" value="TAIR"/>
</dbReference>
<dbReference type="GO" id="GO:0009535">
    <property type="term" value="C:chloroplast thylakoid membrane"/>
    <property type="evidence" value="ECO:0007005"/>
    <property type="project" value="TAIR"/>
</dbReference>
<dbReference type="GO" id="GO:0005829">
    <property type="term" value="C:cytosol"/>
    <property type="evidence" value="ECO:0007005"/>
    <property type="project" value="TAIR"/>
</dbReference>
<dbReference type="GO" id="GO:0009538">
    <property type="term" value="C:photosystem I reaction center"/>
    <property type="evidence" value="ECO:0007669"/>
    <property type="project" value="InterPro"/>
</dbReference>
<dbReference type="GO" id="GO:0015979">
    <property type="term" value="P:photosynthesis"/>
    <property type="evidence" value="ECO:0007669"/>
    <property type="project" value="UniProtKB-KW"/>
</dbReference>
<dbReference type="FunFam" id="1.20.5.220:FF:000003">
    <property type="entry name" value="Photosystem I reaction center subunit VI"/>
    <property type="match status" value="1"/>
</dbReference>
<dbReference type="Gene3D" id="1.20.5.220">
    <property type="match status" value="1"/>
</dbReference>
<dbReference type="InterPro" id="IPR004928">
    <property type="entry name" value="PSI_PsaH"/>
</dbReference>
<dbReference type="PANTHER" id="PTHR34787:SF2">
    <property type="entry name" value="PHOTOSYSTEM I REACTION CENTER SUBUNIT VI-1, CHLOROPLASTIC"/>
    <property type="match status" value="1"/>
</dbReference>
<dbReference type="PANTHER" id="PTHR34787">
    <property type="entry name" value="PHOTOSYSTEM I REACTION CENTER SUBUNIT VI-2, CHLOROPLASTIC"/>
    <property type="match status" value="1"/>
</dbReference>
<dbReference type="Pfam" id="PF03244">
    <property type="entry name" value="PSI_PsaH"/>
    <property type="match status" value="1"/>
</dbReference>
<protein>
    <recommendedName>
        <fullName>Photosystem I reaction center subunit VI-1, chloroplastic</fullName>
    </recommendedName>
    <alternativeName>
        <fullName>PSI-H1</fullName>
    </alternativeName>
</protein>
<name>PSAH1_ARATH</name>
<keyword id="KW-0150">Chloroplast</keyword>
<keyword id="KW-0472">Membrane</keyword>
<keyword id="KW-0602">Photosynthesis</keyword>
<keyword id="KW-0603">Photosystem I</keyword>
<keyword id="KW-0934">Plastid</keyword>
<keyword id="KW-1185">Reference proteome</keyword>
<keyword id="KW-0793">Thylakoid</keyword>
<keyword id="KW-0809">Transit peptide</keyword>
<keyword id="KW-0812">Transmembrane</keyword>
<keyword id="KW-1133">Transmembrane helix</keyword>
<reference key="1">
    <citation type="submission" date="1999-08" db="EMBL/GenBank/DDBJ databases">
        <title>Sequences and map position of 31 Arabidopsis thaliana cDNAs encoding organellar polypeptides.</title>
        <authorList>
            <person name="Legen J."/>
            <person name="Misera S."/>
            <person name="Herrmann R.G."/>
            <person name="Altschmied L."/>
        </authorList>
    </citation>
    <scope>NUCLEOTIDE SEQUENCE [MRNA]</scope>
    <source>
        <strain>cv. Columbia</strain>
    </source>
</reference>
<reference key="2">
    <citation type="journal article" date="2000" name="DNA Res.">
        <title>Structural analysis of Arabidopsis thaliana chromosome 3. I. Sequence features of the regions of 4,504,864 bp covered by sixty P1 and TAC clones.</title>
        <authorList>
            <person name="Sato S."/>
            <person name="Nakamura Y."/>
            <person name="Kaneko T."/>
            <person name="Katoh T."/>
            <person name="Asamizu E."/>
            <person name="Tabata S."/>
        </authorList>
    </citation>
    <scope>NUCLEOTIDE SEQUENCE [LARGE SCALE GENOMIC DNA]</scope>
    <source>
        <strain>cv. Columbia</strain>
    </source>
</reference>
<reference key="3">
    <citation type="journal article" date="2017" name="Plant J.">
        <title>Araport11: a complete reannotation of the Arabidopsis thaliana reference genome.</title>
        <authorList>
            <person name="Cheng C.Y."/>
            <person name="Krishnakumar V."/>
            <person name="Chan A.P."/>
            <person name="Thibaud-Nissen F."/>
            <person name="Schobel S."/>
            <person name="Town C.D."/>
        </authorList>
    </citation>
    <scope>GENOME REANNOTATION</scope>
    <source>
        <strain>cv. Columbia</strain>
    </source>
</reference>
<reference key="4">
    <citation type="submission" date="2002-03" db="EMBL/GenBank/DDBJ databases">
        <title>Full-length cDNA from Arabidopsis thaliana.</title>
        <authorList>
            <person name="Brover V.V."/>
            <person name="Troukhan M.E."/>
            <person name="Alexandrov N.A."/>
            <person name="Lu Y.-P."/>
            <person name="Flavell R.B."/>
            <person name="Feldmann K.A."/>
        </authorList>
    </citation>
    <scope>NUCLEOTIDE SEQUENCE [LARGE SCALE MRNA]</scope>
</reference>
<reference key="5">
    <citation type="journal article" date="1996" name="Plant J.">
        <title>Further progress towards a catalogue of all Arabidopsis genes: analysis of a set of 5000 non-redundant ESTs.</title>
        <authorList>
            <person name="Cooke R."/>
            <person name="Raynal M."/>
            <person name="Laudie M."/>
            <person name="Grellet F."/>
            <person name="Delseny M."/>
            <person name="Morris P.-C."/>
            <person name="Guerrier D."/>
            <person name="Giraudat J."/>
            <person name="Quigley F."/>
            <person name="Clabault G."/>
            <person name="Li Y.-F."/>
            <person name="Mache R."/>
            <person name="Krivitzky M."/>
            <person name="Gy I.J.-J."/>
            <person name="Kreis M."/>
            <person name="Lecharny A."/>
            <person name="Parmentier Y."/>
            <person name="Marbach J."/>
            <person name="Fleck J."/>
            <person name="Clement B."/>
            <person name="Philipps G."/>
            <person name="Herve C."/>
            <person name="Bardet C."/>
            <person name="Tremousaygue D."/>
            <person name="Lescure B."/>
            <person name="Lacomme C."/>
            <person name="Roby D."/>
            <person name="Jourjon M.-F."/>
            <person name="Chabrier P."/>
            <person name="Charpenteau J.-L."/>
            <person name="Desprez T."/>
            <person name="Amselem J."/>
            <person name="Chiapello H."/>
            <person name="Hoefte H."/>
        </authorList>
    </citation>
    <scope>NUCLEOTIDE SEQUENCE [LARGE SCALE MRNA] OF 31-127</scope>
    <source>
        <strain>cv. Columbia</strain>
    </source>
</reference>
<evidence type="ECO:0000250" key="1"/>
<evidence type="ECO:0000255" key="2"/>
<evidence type="ECO:0000305" key="3"/>
<proteinExistence type="evidence at transcript level"/>
<feature type="transit peptide" description="Chloroplast" evidence="1">
    <location>
        <begin position="1"/>
        <end position="50"/>
    </location>
</feature>
<feature type="chain" id="PRO_0000029412" description="Photosystem I reaction center subunit VI-1, chloroplastic">
    <location>
        <begin position="51"/>
        <end position="145"/>
    </location>
</feature>
<feature type="transmembrane region" description="Helical" evidence="2">
    <location>
        <begin position="102"/>
        <end position="118"/>
    </location>
</feature>
<feature type="sequence conflict" description="In Ref. 5." evidence="3" ref="5">
    <original>GSLLTYVSATSTGEVL</original>
    <variation>RLFGYLCQRYLYRRSS</variation>
    <location>
        <begin position="112"/>
        <end position="127"/>
    </location>
</feature>
<comment type="function">
    <text>Possible role could be the docking of the LHC I antenna complex to the core complex.</text>
</comment>
<comment type="subcellular location">
    <subcellularLocation>
        <location evidence="3">Plastid</location>
        <location evidence="3">Chloroplast thylakoid membrane</location>
        <topology evidence="3">Single-pass membrane protein</topology>
    </subcellularLocation>
</comment>
<comment type="similarity">
    <text evidence="3">Belongs to the psaH family.</text>
</comment>
<organism>
    <name type="scientific">Arabidopsis thaliana</name>
    <name type="common">Mouse-ear cress</name>
    <dbReference type="NCBI Taxonomy" id="3702"/>
    <lineage>
        <taxon>Eukaryota</taxon>
        <taxon>Viridiplantae</taxon>
        <taxon>Streptophyta</taxon>
        <taxon>Embryophyta</taxon>
        <taxon>Tracheophyta</taxon>
        <taxon>Spermatophyta</taxon>
        <taxon>Magnoliopsida</taxon>
        <taxon>eudicotyledons</taxon>
        <taxon>Gunneridae</taxon>
        <taxon>Pentapetalae</taxon>
        <taxon>rosids</taxon>
        <taxon>malvids</taxon>
        <taxon>Brassicales</taxon>
        <taxon>Brassicaceae</taxon>
        <taxon>Camelineae</taxon>
        <taxon>Arabidopsis</taxon>
    </lineage>
</organism>
<gene>
    <name type="primary">PSAH1</name>
    <name type="ordered locus">At3g16140</name>
    <name type="ORF">MSL1.18</name>
</gene>
<accession>Q9SUI7</accession>
<accession>Q42295</accession>